<accession>A4VJB3</accession>
<sequence length="874" mass="94575">MKSAEIREAFLRFFEEKGHTRVASSSLIPANDPTLLFTNAGMNQFKDCFLGLEKRAYTRATTSQKCVRAGGKHNDLENVGYTARHHTFFEMLGNFSFGDYFKRDAIHYAWEFLTSDKWLKLPKEKLWVTVYATDDEAYDIWTKEVGVPAERMVRIGDNKGAPYASDNFWAMGDTGPCGPCTEIFFDHGEHIWGGPPGSPEEDGDRYIEIWNNVFMQFNRTADGVLHPLPAPSVDTGMGLERISAVLQHVNSNYEIDLFQSLLNAAADAIGCANEGQASLKVVADHIRSCGFLIADGVTPSNEGRGYVLRRIIRRACRHGNKLGAKGSFFHRIVAALVAEMGDAFPELKQQQAHIERVLKNEEEQFAKTLEQGLKILEQDLAGLAGSVIPGEVVFKLYDTYGFPVDLTGDIARERNLTLDEEGFEREMQAQRERARSASAFGMDYNSLVKVEGETRFIGYQGTSGSGKVLALFKQGMLVDSLSAGEEGVVVLDQTPFYAESGGQIGDCGYLEAQGLRFDVRDTSKAGGAFLHHGIVDSGTLTTGAQVEATVDASVRQATALNHSATHLLHAALREILGEHVSQKGSLVDSQRLRFDFSHFEAIKPEQLRALEDRVNAEIRRNSAVEIEETDIDTAKAKGAMALFGEKYGDTVRVLTMGGGFSVELCGGTHVNRTGDIGLFKITSEGGVAAGVRRIEAVTGAPALAYLNDAEEQLKQAASLVKGSRENLLDKLGGLLERNRQLEKELEQLKAKAASAAGNDLAASAVEVNGIRVLAARQDGLDGKALLALVDQLKNKLGSAVILLGGVQDDKVVLVAGVTQDLTSRLKAGDLMRQAAAAVGGKGGGRPDMAQGGGTDAAKLDEALALALPFAQQAL</sequence>
<name>SYA_STUS1</name>
<keyword id="KW-0030">Aminoacyl-tRNA synthetase</keyword>
<keyword id="KW-0067">ATP-binding</keyword>
<keyword id="KW-0963">Cytoplasm</keyword>
<keyword id="KW-0436">Ligase</keyword>
<keyword id="KW-0479">Metal-binding</keyword>
<keyword id="KW-0547">Nucleotide-binding</keyword>
<keyword id="KW-0648">Protein biosynthesis</keyword>
<keyword id="KW-1185">Reference proteome</keyword>
<keyword id="KW-0694">RNA-binding</keyword>
<keyword id="KW-0820">tRNA-binding</keyword>
<keyword id="KW-0862">Zinc</keyword>
<organism>
    <name type="scientific">Stutzerimonas stutzeri (strain A1501)</name>
    <name type="common">Pseudomonas stutzeri</name>
    <dbReference type="NCBI Taxonomy" id="379731"/>
    <lineage>
        <taxon>Bacteria</taxon>
        <taxon>Pseudomonadati</taxon>
        <taxon>Pseudomonadota</taxon>
        <taxon>Gammaproteobacteria</taxon>
        <taxon>Pseudomonadales</taxon>
        <taxon>Pseudomonadaceae</taxon>
        <taxon>Stutzerimonas</taxon>
    </lineage>
</organism>
<evidence type="ECO:0000255" key="1">
    <source>
        <dbReference type="HAMAP-Rule" id="MF_00036"/>
    </source>
</evidence>
<evidence type="ECO:0000305" key="2"/>
<reference key="1">
    <citation type="journal article" date="2008" name="Proc. Natl. Acad. Sci. U.S.A.">
        <title>Nitrogen fixation island and rhizosphere competence traits in the genome of root-associated Pseudomonas stutzeri A1501.</title>
        <authorList>
            <person name="Yan Y."/>
            <person name="Yang J."/>
            <person name="Dou Y."/>
            <person name="Chen M."/>
            <person name="Ping S."/>
            <person name="Peng J."/>
            <person name="Lu W."/>
            <person name="Zhang W."/>
            <person name="Yao Z."/>
            <person name="Li H."/>
            <person name="Liu W."/>
            <person name="He S."/>
            <person name="Geng L."/>
            <person name="Zhang X."/>
            <person name="Yang F."/>
            <person name="Yu H."/>
            <person name="Zhan Y."/>
            <person name="Li D."/>
            <person name="Lin Z."/>
            <person name="Wang Y."/>
            <person name="Elmerich C."/>
            <person name="Lin M."/>
            <person name="Jin Q."/>
        </authorList>
    </citation>
    <scope>NUCLEOTIDE SEQUENCE [LARGE SCALE GENOMIC DNA]</scope>
    <source>
        <strain>A1501</strain>
    </source>
</reference>
<proteinExistence type="inferred from homology"/>
<feature type="chain" id="PRO_0000347743" description="Alanine--tRNA ligase">
    <location>
        <begin position="1"/>
        <end position="874"/>
    </location>
</feature>
<feature type="binding site" evidence="1">
    <location>
        <position position="562"/>
    </location>
    <ligand>
        <name>Zn(2+)</name>
        <dbReference type="ChEBI" id="CHEBI:29105"/>
    </ligand>
</feature>
<feature type="binding site" evidence="1">
    <location>
        <position position="566"/>
    </location>
    <ligand>
        <name>Zn(2+)</name>
        <dbReference type="ChEBI" id="CHEBI:29105"/>
    </ligand>
</feature>
<feature type="binding site" evidence="1">
    <location>
        <position position="665"/>
    </location>
    <ligand>
        <name>Zn(2+)</name>
        <dbReference type="ChEBI" id="CHEBI:29105"/>
    </ligand>
</feature>
<feature type="binding site" evidence="1">
    <location>
        <position position="669"/>
    </location>
    <ligand>
        <name>Zn(2+)</name>
        <dbReference type="ChEBI" id="CHEBI:29105"/>
    </ligand>
</feature>
<gene>
    <name evidence="1" type="primary">alaS</name>
    <name type="ordered locus">PST_1369</name>
</gene>
<protein>
    <recommendedName>
        <fullName evidence="1">Alanine--tRNA ligase</fullName>
        <ecNumber evidence="1">6.1.1.7</ecNumber>
    </recommendedName>
    <alternativeName>
        <fullName evidence="1">Alanyl-tRNA synthetase</fullName>
        <shortName evidence="1">AlaRS</shortName>
    </alternativeName>
</protein>
<comment type="function">
    <text evidence="1">Catalyzes the attachment of alanine to tRNA(Ala) in a two-step reaction: alanine is first activated by ATP to form Ala-AMP and then transferred to the acceptor end of tRNA(Ala). Also edits incorrectly charged Ser-tRNA(Ala) and Gly-tRNA(Ala) via its editing domain.</text>
</comment>
<comment type="catalytic activity">
    <reaction evidence="1">
        <text>tRNA(Ala) + L-alanine + ATP = L-alanyl-tRNA(Ala) + AMP + diphosphate</text>
        <dbReference type="Rhea" id="RHEA:12540"/>
        <dbReference type="Rhea" id="RHEA-COMP:9657"/>
        <dbReference type="Rhea" id="RHEA-COMP:9923"/>
        <dbReference type="ChEBI" id="CHEBI:30616"/>
        <dbReference type="ChEBI" id="CHEBI:33019"/>
        <dbReference type="ChEBI" id="CHEBI:57972"/>
        <dbReference type="ChEBI" id="CHEBI:78442"/>
        <dbReference type="ChEBI" id="CHEBI:78497"/>
        <dbReference type="ChEBI" id="CHEBI:456215"/>
        <dbReference type="EC" id="6.1.1.7"/>
    </reaction>
</comment>
<comment type="cofactor">
    <cofactor evidence="1">
        <name>Zn(2+)</name>
        <dbReference type="ChEBI" id="CHEBI:29105"/>
    </cofactor>
    <text evidence="1">Binds 1 zinc ion per subunit.</text>
</comment>
<comment type="subcellular location">
    <subcellularLocation>
        <location evidence="1">Cytoplasm</location>
    </subcellularLocation>
</comment>
<comment type="domain">
    <text evidence="1">Consists of three domains; the N-terminal catalytic domain, the editing domain and the C-terminal C-Ala domain. The editing domain removes incorrectly charged amino acids, while the C-Ala domain, along with tRNA(Ala), serves as a bridge to cooperatively bring together the editing and aminoacylation centers thus stimulating deacylation of misacylated tRNAs.</text>
</comment>
<comment type="similarity">
    <text evidence="1">Belongs to the class-II aminoacyl-tRNA synthetase family.</text>
</comment>
<comment type="sequence caution" evidence="2">
    <conflict type="erroneous initiation">
        <sequence resource="EMBL-CDS" id="ABP79064"/>
    </conflict>
</comment>
<dbReference type="EC" id="6.1.1.7" evidence="1"/>
<dbReference type="EMBL" id="CP000304">
    <property type="protein sequence ID" value="ABP79064.1"/>
    <property type="status" value="ALT_INIT"/>
    <property type="molecule type" value="Genomic_DNA"/>
</dbReference>
<dbReference type="RefSeq" id="WP_020307297.1">
    <property type="nucleotide sequence ID" value="NC_009434.1"/>
</dbReference>
<dbReference type="SMR" id="A4VJB3"/>
<dbReference type="KEGG" id="psa:PST_1369"/>
<dbReference type="eggNOG" id="COG0013">
    <property type="taxonomic scope" value="Bacteria"/>
</dbReference>
<dbReference type="HOGENOM" id="CLU_004485_1_1_6"/>
<dbReference type="Proteomes" id="UP000000233">
    <property type="component" value="Chromosome"/>
</dbReference>
<dbReference type="GO" id="GO:0005829">
    <property type="term" value="C:cytosol"/>
    <property type="evidence" value="ECO:0007669"/>
    <property type="project" value="TreeGrafter"/>
</dbReference>
<dbReference type="GO" id="GO:0004813">
    <property type="term" value="F:alanine-tRNA ligase activity"/>
    <property type="evidence" value="ECO:0007669"/>
    <property type="project" value="UniProtKB-UniRule"/>
</dbReference>
<dbReference type="GO" id="GO:0002161">
    <property type="term" value="F:aminoacyl-tRNA deacylase activity"/>
    <property type="evidence" value="ECO:0007669"/>
    <property type="project" value="TreeGrafter"/>
</dbReference>
<dbReference type="GO" id="GO:0005524">
    <property type="term" value="F:ATP binding"/>
    <property type="evidence" value="ECO:0007669"/>
    <property type="project" value="UniProtKB-UniRule"/>
</dbReference>
<dbReference type="GO" id="GO:0000049">
    <property type="term" value="F:tRNA binding"/>
    <property type="evidence" value="ECO:0007669"/>
    <property type="project" value="UniProtKB-KW"/>
</dbReference>
<dbReference type="GO" id="GO:0008270">
    <property type="term" value="F:zinc ion binding"/>
    <property type="evidence" value="ECO:0007669"/>
    <property type="project" value="UniProtKB-UniRule"/>
</dbReference>
<dbReference type="GO" id="GO:0006419">
    <property type="term" value="P:alanyl-tRNA aminoacylation"/>
    <property type="evidence" value="ECO:0007669"/>
    <property type="project" value="UniProtKB-UniRule"/>
</dbReference>
<dbReference type="GO" id="GO:0045892">
    <property type="term" value="P:negative regulation of DNA-templated transcription"/>
    <property type="evidence" value="ECO:0007669"/>
    <property type="project" value="TreeGrafter"/>
</dbReference>
<dbReference type="CDD" id="cd00673">
    <property type="entry name" value="AlaRS_core"/>
    <property type="match status" value="1"/>
</dbReference>
<dbReference type="FunFam" id="2.40.30.130:FF:000001">
    <property type="entry name" value="Alanine--tRNA ligase"/>
    <property type="match status" value="1"/>
</dbReference>
<dbReference type="FunFam" id="3.10.310.40:FF:000001">
    <property type="entry name" value="Alanine--tRNA ligase"/>
    <property type="match status" value="1"/>
</dbReference>
<dbReference type="FunFam" id="3.30.54.20:FF:000001">
    <property type="entry name" value="Alanine--tRNA ligase"/>
    <property type="match status" value="1"/>
</dbReference>
<dbReference type="FunFam" id="3.30.930.10:FF:000004">
    <property type="entry name" value="Alanine--tRNA ligase"/>
    <property type="match status" value="1"/>
</dbReference>
<dbReference type="FunFam" id="3.30.980.10:FF:000004">
    <property type="entry name" value="Alanine--tRNA ligase, cytoplasmic"/>
    <property type="match status" value="1"/>
</dbReference>
<dbReference type="Gene3D" id="2.40.30.130">
    <property type="match status" value="1"/>
</dbReference>
<dbReference type="Gene3D" id="3.10.310.40">
    <property type="match status" value="1"/>
</dbReference>
<dbReference type="Gene3D" id="3.30.54.20">
    <property type="match status" value="1"/>
</dbReference>
<dbReference type="Gene3D" id="6.10.250.550">
    <property type="match status" value="1"/>
</dbReference>
<dbReference type="Gene3D" id="3.30.930.10">
    <property type="entry name" value="Bira Bifunctional Protein, Domain 2"/>
    <property type="match status" value="1"/>
</dbReference>
<dbReference type="Gene3D" id="3.30.980.10">
    <property type="entry name" value="Threonyl-trna Synthetase, Chain A, domain 2"/>
    <property type="match status" value="1"/>
</dbReference>
<dbReference type="HAMAP" id="MF_00036_B">
    <property type="entry name" value="Ala_tRNA_synth_B"/>
    <property type="match status" value="1"/>
</dbReference>
<dbReference type="InterPro" id="IPR045864">
    <property type="entry name" value="aa-tRNA-synth_II/BPL/LPL"/>
</dbReference>
<dbReference type="InterPro" id="IPR002318">
    <property type="entry name" value="Ala-tRNA-lgiase_IIc"/>
</dbReference>
<dbReference type="InterPro" id="IPR018162">
    <property type="entry name" value="Ala-tRNA-ligase_IIc_anticod-bd"/>
</dbReference>
<dbReference type="InterPro" id="IPR018165">
    <property type="entry name" value="Ala-tRNA-synth_IIc_core"/>
</dbReference>
<dbReference type="InterPro" id="IPR018164">
    <property type="entry name" value="Ala-tRNA-synth_IIc_N"/>
</dbReference>
<dbReference type="InterPro" id="IPR050058">
    <property type="entry name" value="Ala-tRNA_ligase"/>
</dbReference>
<dbReference type="InterPro" id="IPR023033">
    <property type="entry name" value="Ala_tRNA_ligase_euk/bac"/>
</dbReference>
<dbReference type="InterPro" id="IPR003156">
    <property type="entry name" value="DHHA1_dom"/>
</dbReference>
<dbReference type="InterPro" id="IPR018163">
    <property type="entry name" value="Thr/Ala-tRNA-synth_IIc_edit"/>
</dbReference>
<dbReference type="InterPro" id="IPR009000">
    <property type="entry name" value="Transl_B-barrel_sf"/>
</dbReference>
<dbReference type="InterPro" id="IPR012947">
    <property type="entry name" value="tRNA_SAD"/>
</dbReference>
<dbReference type="NCBIfam" id="TIGR00344">
    <property type="entry name" value="alaS"/>
    <property type="match status" value="1"/>
</dbReference>
<dbReference type="PANTHER" id="PTHR11777:SF9">
    <property type="entry name" value="ALANINE--TRNA LIGASE, CYTOPLASMIC"/>
    <property type="match status" value="1"/>
</dbReference>
<dbReference type="PANTHER" id="PTHR11777">
    <property type="entry name" value="ALANYL-TRNA SYNTHETASE"/>
    <property type="match status" value="1"/>
</dbReference>
<dbReference type="Pfam" id="PF02272">
    <property type="entry name" value="DHHA1"/>
    <property type="match status" value="1"/>
</dbReference>
<dbReference type="Pfam" id="PF01411">
    <property type="entry name" value="tRNA-synt_2c"/>
    <property type="match status" value="1"/>
</dbReference>
<dbReference type="Pfam" id="PF07973">
    <property type="entry name" value="tRNA_SAD"/>
    <property type="match status" value="1"/>
</dbReference>
<dbReference type="PRINTS" id="PR00980">
    <property type="entry name" value="TRNASYNTHALA"/>
</dbReference>
<dbReference type="SMART" id="SM00863">
    <property type="entry name" value="tRNA_SAD"/>
    <property type="match status" value="1"/>
</dbReference>
<dbReference type="SUPFAM" id="SSF55681">
    <property type="entry name" value="Class II aaRS and biotin synthetases"/>
    <property type="match status" value="1"/>
</dbReference>
<dbReference type="SUPFAM" id="SSF101353">
    <property type="entry name" value="Putative anticodon-binding domain of alanyl-tRNA synthetase (AlaRS)"/>
    <property type="match status" value="1"/>
</dbReference>
<dbReference type="SUPFAM" id="SSF55186">
    <property type="entry name" value="ThrRS/AlaRS common domain"/>
    <property type="match status" value="1"/>
</dbReference>
<dbReference type="SUPFAM" id="SSF50447">
    <property type="entry name" value="Translation proteins"/>
    <property type="match status" value="1"/>
</dbReference>
<dbReference type="PROSITE" id="PS50860">
    <property type="entry name" value="AA_TRNA_LIGASE_II_ALA"/>
    <property type="match status" value="1"/>
</dbReference>